<sequence>MKPLLLAVSLGLIAALQAHHLLASDEEIQDVSGTWYLKAMTVDREFPEMNLESVTPMTLTTLEGGNLEAKVTMLISGRCQEVKAVLEKTDEPGKYTADGGKHVAYIIRSHVKDHYIFYCEGELHGKPVRGVKLVGRDPKNNLEALEDFEKAAGARGLSTESILIPRQSETCSPGSD</sequence>
<feature type="signal peptide" evidence="4 5">
    <location>
        <begin position="1"/>
        <end position="18"/>
    </location>
</feature>
<feature type="chain" id="PRO_0000017974" description="Lipocalin-1">
    <location>
        <begin position="19"/>
        <end position="176"/>
    </location>
</feature>
<feature type="disulfide bond">
    <location>
        <begin position="79"/>
        <end position="171"/>
    </location>
</feature>
<feature type="strand" evidence="9">
    <location>
        <begin position="25"/>
        <end position="27"/>
    </location>
</feature>
<feature type="strand" evidence="7">
    <location>
        <begin position="33"/>
        <end position="42"/>
    </location>
</feature>
<feature type="strand" evidence="9">
    <location>
        <begin position="44"/>
        <end position="46"/>
    </location>
</feature>
<feature type="strand" evidence="8">
    <location>
        <begin position="49"/>
        <end position="54"/>
    </location>
</feature>
<feature type="strand" evidence="7">
    <location>
        <begin position="57"/>
        <end position="61"/>
    </location>
</feature>
<feature type="turn" evidence="9">
    <location>
        <begin position="63"/>
        <end position="65"/>
    </location>
</feature>
<feature type="strand" evidence="7">
    <location>
        <begin position="67"/>
        <end position="73"/>
    </location>
</feature>
<feature type="strand" evidence="8">
    <location>
        <begin position="75"/>
        <end position="78"/>
    </location>
</feature>
<feature type="strand" evidence="7">
    <location>
        <begin position="80"/>
        <end position="88"/>
    </location>
</feature>
<feature type="strand" evidence="7">
    <location>
        <begin position="94"/>
        <end position="97"/>
    </location>
</feature>
<feature type="helix" evidence="7">
    <location>
        <begin position="98"/>
        <end position="100"/>
    </location>
</feature>
<feature type="strand" evidence="7">
    <location>
        <begin position="102"/>
        <end position="108"/>
    </location>
</feature>
<feature type="strand" evidence="8">
    <location>
        <begin position="111"/>
        <end position="113"/>
    </location>
</feature>
<feature type="strand" evidence="7">
    <location>
        <begin position="114"/>
        <end position="121"/>
    </location>
</feature>
<feature type="strand" evidence="7">
    <location>
        <begin position="128"/>
        <end position="139"/>
    </location>
</feature>
<feature type="helix" evidence="7">
    <location>
        <begin position="145"/>
        <end position="154"/>
    </location>
</feature>
<feature type="strand" evidence="7">
    <location>
        <begin position="160"/>
        <end position="163"/>
    </location>
</feature>
<proteinExistence type="evidence at protein level"/>
<comment type="function">
    <text>Could play a role in taste reception. Could be necessary for the concentration and delivery of sapid molecules in the gustatory system. Can bind various ligands, with chemical structures ranging from lipids and retinoids to the macrocyclic antibiotic rifampicin and even to microbial siderophores. Exhibits an extremely wide ligand pocket.</text>
</comment>
<comment type="subunit">
    <text evidence="1 2 3">Predominantly monomer (PubMed:17869594). May form homodimer (PubMed:17869594). Interacts with LMBR1L; this interaction mediates the endocytosis of LCN1 (PubMed:11287427, PubMed:12591932).</text>
</comment>
<comment type="interaction">
    <interactant intactId="EBI-1052433">
        <id>P31025</id>
    </interactant>
    <interactant intactId="EBI-79934">
        <id>P09917</id>
        <label>ALOX5</label>
    </interactant>
    <organismsDiffer>false</organismsDiffer>
    <experiments>3</experiments>
</comment>
<comment type="interaction">
    <interactant intactId="EBI-1052433">
        <id>P31025</id>
    </interactant>
    <interactant intactId="EBI-14240149">
        <id>B3EWG3</id>
        <label>FAM25A</label>
    </interactant>
    <organismsDiffer>false</organismsDiffer>
    <experiments>3</experiments>
</comment>
<comment type="interaction">
    <interactant intactId="EBI-1052433">
        <id>P31025</id>
    </interactant>
    <interactant intactId="EBI-21825379">
        <id>P01213</id>
        <label>PDYN</label>
    </interactant>
    <organismsDiffer>false</organismsDiffer>
    <experiments>2</experiments>
</comment>
<comment type="interaction">
    <interactant intactId="EBI-1052433">
        <id>P31025</id>
    </interactant>
    <interactant intactId="EBI-10253121">
        <id>Q6P9E2</id>
        <label>RECK</label>
    </interactant>
    <organismsDiffer>false</organismsDiffer>
    <experiments>3</experiments>
</comment>
<comment type="interaction">
    <interactant intactId="EBI-1052433">
        <id>P31025</id>
    </interactant>
    <interactant intactId="EBI-947187">
        <id>Q9UHD9</id>
        <label>UBQLN2</label>
    </interactant>
    <organismsDiffer>false</organismsDiffer>
    <experiments>3</experiments>
</comment>
<comment type="subcellular location">
    <subcellularLocation>
        <location>Secreted</location>
    </subcellularLocation>
</comment>
<comment type="tissue specificity">
    <text>Mainly expressed in lachrymal and salivary glands. Also expressed in the prostate.</text>
</comment>
<comment type="similarity">
    <text evidence="6">Belongs to the calycin superfamily. Lipocalin family.</text>
</comment>
<gene>
    <name type="primary">LCN1</name>
    <name type="synonym">VEGP</name>
</gene>
<reference key="1">
    <citation type="journal article" date="1993" name="Biochim. Biophys. Acta">
        <title>Molecular cloning of human von Ebner's gland protein, a member of the lipocalin superfamily highly expressed in lingual salivary glands.</title>
        <authorList>
            <person name="Blaeker M."/>
            <person name="Kock K."/>
            <person name="Ahlers C."/>
            <person name="Buck F."/>
            <person name="Schmale H."/>
        </authorList>
    </citation>
    <scope>NUCLEOTIDE SEQUENCE [MRNA]</scope>
    <source>
        <tissue>Tongue</tissue>
    </source>
</reference>
<reference key="2">
    <citation type="journal article" date="1992" name="J. Biol. Chem.">
        <title>cDNA cloning and sequencing reveals human tear prealbumin to be a member of the lipophilic-ligand carrier protein superfamily.</title>
        <authorList>
            <person name="Redl B."/>
            <person name="Holzfeind P."/>
            <person name="Lottspeich F."/>
        </authorList>
    </citation>
    <scope>NUCLEOTIDE SEQUENCE [MRNA]</scope>
    <source>
        <tissue>Tear</tissue>
    </source>
</reference>
<reference key="3">
    <citation type="journal article" date="1993" name="Exp. Eye Res.">
        <title>Cloning of a human lacrimal lipocalin secreted in tears.</title>
        <authorList>
            <person name="Lassagne H."/>
            <person name="Gachon A.-M."/>
        </authorList>
    </citation>
    <scope>NUCLEOTIDE SEQUENCE [MRNA]</scope>
    <source>
        <tissue>Tear</tissue>
    </source>
</reference>
<reference key="4">
    <citation type="journal article" date="1994" name="Gene">
        <title>Structural organization of the gene encoding the human lipocalin tear prealbumin and synthesis of the recombinant protein in Escherichia coli.</title>
        <authorList>
            <person name="Holzfeind P."/>
            <person name="Redl B."/>
        </authorList>
    </citation>
    <scope>NUCLEOTIDE SEQUENCE [GENOMIC DNA]</scope>
</reference>
<reference key="5">
    <citation type="journal article" date="2004" name="Nature">
        <title>DNA sequence and analysis of human chromosome 9.</title>
        <authorList>
            <person name="Humphray S.J."/>
            <person name="Oliver K."/>
            <person name="Hunt A.R."/>
            <person name="Plumb R.W."/>
            <person name="Loveland J.E."/>
            <person name="Howe K.L."/>
            <person name="Andrews T.D."/>
            <person name="Searle S."/>
            <person name="Hunt S.E."/>
            <person name="Scott C.E."/>
            <person name="Jones M.C."/>
            <person name="Ainscough R."/>
            <person name="Almeida J.P."/>
            <person name="Ambrose K.D."/>
            <person name="Ashwell R.I.S."/>
            <person name="Babbage A.K."/>
            <person name="Babbage S."/>
            <person name="Bagguley C.L."/>
            <person name="Bailey J."/>
            <person name="Banerjee R."/>
            <person name="Barker D.J."/>
            <person name="Barlow K.F."/>
            <person name="Bates K."/>
            <person name="Beasley H."/>
            <person name="Beasley O."/>
            <person name="Bird C.P."/>
            <person name="Bray-Allen S."/>
            <person name="Brown A.J."/>
            <person name="Brown J.Y."/>
            <person name="Burford D."/>
            <person name="Burrill W."/>
            <person name="Burton J."/>
            <person name="Carder C."/>
            <person name="Carter N.P."/>
            <person name="Chapman J.C."/>
            <person name="Chen Y."/>
            <person name="Clarke G."/>
            <person name="Clark S.Y."/>
            <person name="Clee C.M."/>
            <person name="Clegg S."/>
            <person name="Collier R.E."/>
            <person name="Corby N."/>
            <person name="Crosier M."/>
            <person name="Cummings A.T."/>
            <person name="Davies J."/>
            <person name="Dhami P."/>
            <person name="Dunn M."/>
            <person name="Dutta I."/>
            <person name="Dyer L.W."/>
            <person name="Earthrowl M.E."/>
            <person name="Faulkner L."/>
            <person name="Fleming C.J."/>
            <person name="Frankish A."/>
            <person name="Frankland J.A."/>
            <person name="French L."/>
            <person name="Fricker D.G."/>
            <person name="Garner P."/>
            <person name="Garnett J."/>
            <person name="Ghori J."/>
            <person name="Gilbert J.G.R."/>
            <person name="Glison C."/>
            <person name="Grafham D.V."/>
            <person name="Gribble S."/>
            <person name="Griffiths C."/>
            <person name="Griffiths-Jones S."/>
            <person name="Grocock R."/>
            <person name="Guy J."/>
            <person name="Hall R.E."/>
            <person name="Hammond S."/>
            <person name="Harley J.L."/>
            <person name="Harrison E.S.I."/>
            <person name="Hart E.A."/>
            <person name="Heath P.D."/>
            <person name="Henderson C.D."/>
            <person name="Hopkins B.L."/>
            <person name="Howard P.J."/>
            <person name="Howden P.J."/>
            <person name="Huckle E."/>
            <person name="Johnson C."/>
            <person name="Johnson D."/>
            <person name="Joy A.A."/>
            <person name="Kay M."/>
            <person name="Keenan S."/>
            <person name="Kershaw J.K."/>
            <person name="Kimberley A.M."/>
            <person name="King A."/>
            <person name="Knights A."/>
            <person name="Laird G.K."/>
            <person name="Langford C."/>
            <person name="Lawlor S."/>
            <person name="Leongamornlert D.A."/>
            <person name="Leversha M."/>
            <person name="Lloyd C."/>
            <person name="Lloyd D.M."/>
            <person name="Lovell J."/>
            <person name="Martin S."/>
            <person name="Mashreghi-Mohammadi M."/>
            <person name="Matthews L."/>
            <person name="McLaren S."/>
            <person name="McLay K.E."/>
            <person name="McMurray A."/>
            <person name="Milne S."/>
            <person name="Nickerson T."/>
            <person name="Nisbett J."/>
            <person name="Nordsiek G."/>
            <person name="Pearce A.V."/>
            <person name="Peck A.I."/>
            <person name="Porter K.M."/>
            <person name="Pandian R."/>
            <person name="Pelan S."/>
            <person name="Phillimore B."/>
            <person name="Povey S."/>
            <person name="Ramsey Y."/>
            <person name="Rand V."/>
            <person name="Scharfe M."/>
            <person name="Sehra H.K."/>
            <person name="Shownkeen R."/>
            <person name="Sims S.K."/>
            <person name="Skuce C.D."/>
            <person name="Smith M."/>
            <person name="Steward C.A."/>
            <person name="Swarbreck D."/>
            <person name="Sycamore N."/>
            <person name="Tester J."/>
            <person name="Thorpe A."/>
            <person name="Tracey A."/>
            <person name="Tromans A."/>
            <person name="Thomas D.W."/>
            <person name="Wall M."/>
            <person name="Wallis J.M."/>
            <person name="West A.P."/>
            <person name="Whitehead S.L."/>
            <person name="Willey D.L."/>
            <person name="Williams S.A."/>
            <person name="Wilming L."/>
            <person name="Wray P.W."/>
            <person name="Young L."/>
            <person name="Ashurst J.L."/>
            <person name="Coulson A."/>
            <person name="Blocker H."/>
            <person name="Durbin R.M."/>
            <person name="Sulston J.E."/>
            <person name="Hubbard T."/>
            <person name="Jackson M.J."/>
            <person name="Bentley D.R."/>
            <person name="Beck S."/>
            <person name="Rogers J."/>
            <person name="Dunham I."/>
        </authorList>
    </citation>
    <scope>NUCLEOTIDE SEQUENCE [LARGE SCALE GENOMIC DNA]</scope>
</reference>
<reference key="6">
    <citation type="submission" date="2005-07" db="EMBL/GenBank/DDBJ databases">
        <authorList>
            <person name="Mural R.J."/>
            <person name="Istrail S."/>
            <person name="Sutton G.G."/>
            <person name="Florea L."/>
            <person name="Halpern A.L."/>
            <person name="Mobarry C.M."/>
            <person name="Lippert R."/>
            <person name="Walenz B."/>
            <person name="Shatkay H."/>
            <person name="Dew I."/>
            <person name="Miller J.R."/>
            <person name="Flanigan M.J."/>
            <person name="Edwards N.J."/>
            <person name="Bolanos R."/>
            <person name="Fasulo D."/>
            <person name="Halldorsson B.V."/>
            <person name="Hannenhalli S."/>
            <person name="Turner R."/>
            <person name="Yooseph S."/>
            <person name="Lu F."/>
            <person name="Nusskern D.R."/>
            <person name="Shue B.C."/>
            <person name="Zheng X.H."/>
            <person name="Zhong F."/>
            <person name="Delcher A.L."/>
            <person name="Huson D.H."/>
            <person name="Kravitz S.A."/>
            <person name="Mouchard L."/>
            <person name="Reinert K."/>
            <person name="Remington K.A."/>
            <person name="Clark A.G."/>
            <person name="Waterman M.S."/>
            <person name="Eichler E.E."/>
            <person name="Adams M.D."/>
            <person name="Hunkapiller M.W."/>
            <person name="Myers E.W."/>
            <person name="Venter J.C."/>
        </authorList>
    </citation>
    <scope>NUCLEOTIDE SEQUENCE [LARGE SCALE GENOMIC DNA]</scope>
</reference>
<reference key="7">
    <citation type="journal article" date="2004" name="Genome Res.">
        <title>The status, quality, and expansion of the NIH full-length cDNA project: the Mammalian Gene Collection (MGC).</title>
        <authorList>
            <consortium name="The MGC Project Team"/>
        </authorList>
    </citation>
    <scope>NUCLEOTIDE SEQUENCE [LARGE SCALE MRNA]</scope>
</reference>
<reference key="8">
    <citation type="journal article" date="1997" name="Comp. Biochem. Physiol.">
        <title>Expression of a lipocalin in human nasal mucosa.</title>
        <authorList>
            <person name="Scalfari F."/>
            <person name="Castagna M."/>
            <person name="Fattori B."/>
            <person name="Andreini I."/>
            <person name="Maremmani C."/>
            <person name="Pelosi P."/>
        </authorList>
    </citation>
    <scope>PROTEIN SEQUENCE OF 19-38</scope>
    <source>
        <tissue>Nasal mucus</tissue>
    </source>
</reference>
<reference key="9">
    <citation type="journal article" date="2015" name="J. Proteome Res.">
        <title>Human basal tear peptidome characterization by CID, HCD, and ETD followed by in silico and in vitro analyses for antimicrobial peptide identification.</title>
        <authorList>
            <person name="Azkargorta M."/>
            <person name="Soria J."/>
            <person name="Ojeda C."/>
            <person name="Guzman F."/>
            <person name="Acera A."/>
            <person name="Iloro I."/>
            <person name="Suarez T."/>
            <person name="Elortza F."/>
        </authorList>
    </citation>
    <scope>PROTEIN SEQUENCE OF 19-35 AND 138-176</scope>
    <scope>IDENTIFICATION BY MASS SPECTROMETRY</scope>
    <source>
        <tissue>Tear</tissue>
    </source>
</reference>
<reference key="10">
    <citation type="journal article" date="2001" name="J. Biol. Chem.">
        <title>Molecular cloning of a novel lipocalin-1 interacting human cell membrane receptor using phage display.</title>
        <authorList>
            <person name="Wojnar P."/>
            <person name="Lechner M."/>
            <person name="Merschak P."/>
            <person name="Redl B."/>
        </authorList>
    </citation>
    <scope>INTERACTION WITH LMBR1L</scope>
    <source>
        <tissue>Pituitary</tissue>
    </source>
</reference>
<reference key="11">
    <citation type="journal article" date="2003" name="J. Biol. Chem.">
        <title>Antisense down-regulation of lipocalin-interacting membrane receptor expression inhibits cellular internalization of lipocalin-1 in human NT2 cells.</title>
        <authorList>
            <person name="Wojnar P."/>
            <person name="Lechner M."/>
            <person name="Redl B."/>
        </authorList>
    </citation>
    <scope>INTERACTION WITH LMBR1L</scope>
    <scope>ENDOCYTOSIS</scope>
</reference>
<reference key="12">
    <citation type="journal article" date="2007" name="Biochim. Biophys. Acta">
        <title>Oligomeric state of lipocalin-1 (LCN1) by multiangle laser light scattering and fluorescence anisotropy decay.</title>
        <authorList>
            <person name="Gasymov O.K."/>
            <person name="Abduragimov A.R."/>
            <person name="Merschak P."/>
            <person name="Redl B."/>
            <person name="Glasgow B.J."/>
        </authorList>
    </citation>
    <scope>SUBUNIT</scope>
</reference>
<reference key="13">
    <citation type="journal article" date="2005" name="J. Biol. Chem.">
        <title>The 1.8-A crystal structure of human tear lipocalin reveals an extended branched cavity with capacity for multiple ligands.</title>
        <authorList>
            <person name="Breustedt D.A."/>
            <person name="Korndorfer I.P."/>
            <person name="Redl B."/>
            <person name="Skerra A."/>
        </authorList>
    </citation>
    <scope>X-RAY CRYSTALLOGRAPHY (1.8 ANGSTROMS) OF 23-175</scope>
</reference>
<keyword id="KW-0002">3D-structure</keyword>
<keyword id="KW-0903">Direct protein sequencing</keyword>
<keyword id="KW-1015">Disulfide bond</keyword>
<keyword id="KW-1267">Proteomics identification</keyword>
<keyword id="KW-1185">Reference proteome</keyword>
<keyword id="KW-0964">Secreted</keyword>
<keyword id="KW-0716">Sensory transduction</keyword>
<keyword id="KW-0732">Signal</keyword>
<keyword id="KW-0919">Taste</keyword>
<keyword id="KW-0813">Transport</keyword>
<dbReference type="EMBL" id="X62418">
    <property type="protein sequence ID" value="CAA44284.1"/>
    <property type="molecule type" value="mRNA"/>
</dbReference>
<dbReference type="EMBL" id="M90424">
    <property type="protein sequence ID" value="AAA61845.1"/>
    <property type="molecule type" value="mRNA"/>
</dbReference>
<dbReference type="EMBL" id="X67647">
    <property type="protein sequence ID" value="CAA47889.1"/>
    <property type="molecule type" value="mRNA"/>
</dbReference>
<dbReference type="EMBL" id="L14927">
    <property type="protein sequence ID" value="AAA18633.1"/>
    <property type="molecule type" value="Genomic_DNA"/>
</dbReference>
<dbReference type="EMBL" id="AL161452">
    <property type="status" value="NOT_ANNOTATED_CDS"/>
    <property type="molecule type" value="Genomic_DNA"/>
</dbReference>
<dbReference type="EMBL" id="CH471090">
    <property type="protein sequence ID" value="EAW88156.1"/>
    <property type="molecule type" value="Genomic_DNA"/>
</dbReference>
<dbReference type="EMBL" id="BC065721">
    <property type="protein sequence ID" value="AAH65721.1"/>
    <property type="molecule type" value="mRNA"/>
</dbReference>
<dbReference type="EMBL" id="BC074925">
    <property type="protein sequence ID" value="AAH74925.1"/>
    <property type="molecule type" value="mRNA"/>
</dbReference>
<dbReference type="EMBL" id="BC074926">
    <property type="protein sequence ID" value="AAH74926.1"/>
    <property type="molecule type" value="mRNA"/>
</dbReference>
<dbReference type="CCDS" id="CCDS6991.1"/>
<dbReference type="PIR" id="A44029">
    <property type="entry name" value="LCHUL"/>
</dbReference>
<dbReference type="RefSeq" id="NP_001239546.1">
    <property type="nucleotide sequence ID" value="NM_001252617.2"/>
</dbReference>
<dbReference type="RefSeq" id="NP_001239547.1">
    <property type="nucleotide sequence ID" value="NM_001252618.1"/>
</dbReference>
<dbReference type="RefSeq" id="NP_001239548.1">
    <property type="nucleotide sequence ID" value="NM_001252619.1"/>
</dbReference>
<dbReference type="RefSeq" id="NP_002288.1">
    <property type="nucleotide sequence ID" value="NM_002297.4"/>
</dbReference>
<dbReference type="PDB" id="1XKI">
    <property type="method" value="X-ray"/>
    <property type="resolution" value="1.80 A"/>
    <property type="chains" value="A=23-176"/>
</dbReference>
<dbReference type="PDB" id="3EYC">
    <property type="method" value="X-ray"/>
    <property type="resolution" value="2.60 A"/>
    <property type="chains" value="A/B/C/D=23-176"/>
</dbReference>
<dbReference type="PDB" id="4QAF">
    <property type="method" value="X-ray"/>
    <property type="resolution" value="1.80 A"/>
    <property type="chains" value="A/B=23-174"/>
</dbReference>
<dbReference type="PDB" id="5T43">
    <property type="method" value="NMR"/>
    <property type="chains" value="A=19-176"/>
</dbReference>
<dbReference type="PDBsum" id="1XKI"/>
<dbReference type="PDBsum" id="3EYC"/>
<dbReference type="PDBsum" id="4QAF"/>
<dbReference type="PDBsum" id="5T43"/>
<dbReference type="SMR" id="P31025"/>
<dbReference type="BioGRID" id="110125">
    <property type="interactions" value="135"/>
</dbReference>
<dbReference type="FunCoup" id="P31025">
    <property type="interactions" value="52"/>
</dbReference>
<dbReference type="IntAct" id="P31025">
    <property type="interactions" value="60"/>
</dbReference>
<dbReference type="MINT" id="P31025"/>
<dbReference type="STRING" id="9606.ENSP00000263598"/>
<dbReference type="DrugBank" id="DB00755">
    <property type="generic name" value="Tretinoin"/>
</dbReference>
<dbReference type="SwissLipids" id="SLP:000001525"/>
<dbReference type="Allergome" id="3990">
    <property type="allergen name" value="Hom s TL"/>
</dbReference>
<dbReference type="GlyGen" id="P31025">
    <property type="glycosylation" value="2 sites, 1 O-linked glycan (1 site)"/>
</dbReference>
<dbReference type="iPTMnet" id="P31025"/>
<dbReference type="PhosphoSitePlus" id="P31025"/>
<dbReference type="BioMuta" id="LCN1"/>
<dbReference type="DMDM" id="401346"/>
<dbReference type="jPOST" id="P31025"/>
<dbReference type="MassIVE" id="P31025"/>
<dbReference type="PaxDb" id="9606-ENSP00000263598"/>
<dbReference type="PeptideAtlas" id="P31025"/>
<dbReference type="PRIDE" id="P31025"/>
<dbReference type="ProteomicsDB" id="54757"/>
<dbReference type="TopDownProteomics" id="P31025"/>
<dbReference type="Antibodypedia" id="32051">
    <property type="antibodies" value="248 antibodies from 33 providers"/>
</dbReference>
<dbReference type="DNASU" id="3933"/>
<dbReference type="Ensembl" id="ENST00000263598.6">
    <property type="protein sequence ID" value="ENSP00000263598.2"/>
    <property type="gene ID" value="ENSG00000160349.10"/>
</dbReference>
<dbReference type="Ensembl" id="ENST00000371781.4">
    <property type="protein sequence ID" value="ENSP00000360846.3"/>
    <property type="gene ID" value="ENSG00000160349.10"/>
</dbReference>
<dbReference type="GeneID" id="3933"/>
<dbReference type="KEGG" id="hsa:3933"/>
<dbReference type="MANE-Select" id="ENST00000371781.4">
    <property type="protein sequence ID" value="ENSP00000360846.3"/>
    <property type="RefSeq nucleotide sequence ID" value="NM_002297.4"/>
    <property type="RefSeq protein sequence ID" value="NP_002288.1"/>
</dbReference>
<dbReference type="UCSC" id="uc004cfz.3">
    <property type="organism name" value="human"/>
</dbReference>
<dbReference type="AGR" id="HGNC:6525"/>
<dbReference type="CTD" id="3933"/>
<dbReference type="DisGeNET" id="3933"/>
<dbReference type="GeneCards" id="LCN1"/>
<dbReference type="HGNC" id="HGNC:6525">
    <property type="gene designation" value="LCN1"/>
</dbReference>
<dbReference type="HPA" id="ENSG00000160349">
    <property type="expression patterns" value="Group enriched (esophagus, seminal vesicle)"/>
</dbReference>
<dbReference type="MIM" id="151675">
    <property type="type" value="gene"/>
</dbReference>
<dbReference type="neXtProt" id="NX_P31025"/>
<dbReference type="OpenTargets" id="ENSG00000160349"/>
<dbReference type="PharmGKB" id="PA30308"/>
<dbReference type="VEuPathDB" id="HostDB:ENSG00000160349"/>
<dbReference type="eggNOG" id="ENOG502S22P">
    <property type="taxonomic scope" value="Eukaryota"/>
</dbReference>
<dbReference type="GeneTree" id="ENSGT01050000244868"/>
<dbReference type="HOGENOM" id="CLU_125034_0_0_1"/>
<dbReference type="InParanoid" id="P31025"/>
<dbReference type="OMA" id="SGQCQEM"/>
<dbReference type="OrthoDB" id="9447591at2759"/>
<dbReference type="PAN-GO" id="P31025">
    <property type="GO annotations" value="1 GO annotation based on evolutionary models"/>
</dbReference>
<dbReference type="PhylomeDB" id="P31025"/>
<dbReference type="TreeFam" id="TF338197"/>
<dbReference type="PathwayCommons" id="P31025"/>
<dbReference type="Reactome" id="R-HSA-804914">
    <property type="pathway name" value="Transport of fatty acids"/>
</dbReference>
<dbReference type="SignaLink" id="P31025"/>
<dbReference type="BioGRID-ORCS" id="3933">
    <property type="hits" value="31 hits in 1112 CRISPR screens"/>
</dbReference>
<dbReference type="ChiTaRS" id="LCN1">
    <property type="organism name" value="human"/>
</dbReference>
<dbReference type="EvolutionaryTrace" id="P31025"/>
<dbReference type="GeneWiki" id="LCN1"/>
<dbReference type="GenomeRNAi" id="3933"/>
<dbReference type="Pharos" id="P31025">
    <property type="development level" value="Tbio"/>
</dbReference>
<dbReference type="PRO" id="PR:P31025"/>
<dbReference type="Proteomes" id="UP000005640">
    <property type="component" value="Chromosome 9"/>
</dbReference>
<dbReference type="RNAct" id="P31025">
    <property type="molecule type" value="protein"/>
</dbReference>
<dbReference type="Bgee" id="ENSG00000160349">
    <property type="expression patterns" value="Expressed in lacrimal gland and 77 other cell types or tissues"/>
</dbReference>
<dbReference type="ExpressionAtlas" id="P31025">
    <property type="expression patterns" value="baseline and differential"/>
</dbReference>
<dbReference type="GO" id="GO:0005576">
    <property type="term" value="C:extracellular region"/>
    <property type="evidence" value="ECO:0000304"/>
    <property type="project" value="Reactome"/>
</dbReference>
<dbReference type="GO" id="GO:0005615">
    <property type="term" value="C:extracellular space"/>
    <property type="evidence" value="ECO:0000314"/>
    <property type="project" value="UniProtKB"/>
</dbReference>
<dbReference type="GO" id="GO:0031404">
    <property type="term" value="F:chloride ion binding"/>
    <property type="evidence" value="ECO:0000314"/>
    <property type="project" value="CAFA"/>
</dbReference>
<dbReference type="GO" id="GO:0004869">
    <property type="term" value="F:cysteine-type endopeptidase inhibitor activity"/>
    <property type="evidence" value="ECO:0000304"/>
    <property type="project" value="ProtInc"/>
</dbReference>
<dbReference type="GO" id="GO:0005102">
    <property type="term" value="F:signaling receptor binding"/>
    <property type="evidence" value="ECO:0000353"/>
    <property type="project" value="UniProtKB"/>
</dbReference>
<dbReference type="GO" id="GO:0008270">
    <property type="term" value="F:zinc ion binding"/>
    <property type="evidence" value="ECO:0000314"/>
    <property type="project" value="CAFA"/>
</dbReference>
<dbReference type="GO" id="GO:0006508">
    <property type="term" value="P:proteolysis"/>
    <property type="evidence" value="ECO:0000304"/>
    <property type="project" value="ProtInc"/>
</dbReference>
<dbReference type="GO" id="GO:0050909">
    <property type="term" value="P:sensory perception of taste"/>
    <property type="evidence" value="ECO:0007669"/>
    <property type="project" value="UniProtKB-KW"/>
</dbReference>
<dbReference type="CDD" id="cd19414">
    <property type="entry name" value="lipocalin_1_3_4_13-like"/>
    <property type="match status" value="1"/>
</dbReference>
<dbReference type="FunFam" id="2.40.128.20:FF:000020">
    <property type="entry name" value="Lipocalin 1"/>
    <property type="match status" value="1"/>
</dbReference>
<dbReference type="Gene3D" id="2.40.128.20">
    <property type="match status" value="1"/>
</dbReference>
<dbReference type="InterPro" id="IPR012674">
    <property type="entry name" value="Calycin"/>
</dbReference>
<dbReference type="InterPro" id="IPR002345">
    <property type="entry name" value="Lipocalin"/>
</dbReference>
<dbReference type="InterPro" id="IPR000566">
    <property type="entry name" value="Lipocln_cytosolic_FA-bd_dom"/>
</dbReference>
<dbReference type="InterPro" id="IPR002450">
    <property type="entry name" value="von_Ebner_gland"/>
</dbReference>
<dbReference type="PANTHER" id="PTHR11430">
    <property type="entry name" value="LIPOCALIN"/>
    <property type="match status" value="1"/>
</dbReference>
<dbReference type="PANTHER" id="PTHR11430:SF136">
    <property type="entry name" value="LIPOCALIN-1"/>
    <property type="match status" value="1"/>
</dbReference>
<dbReference type="Pfam" id="PF00061">
    <property type="entry name" value="Lipocalin"/>
    <property type="match status" value="1"/>
</dbReference>
<dbReference type="PRINTS" id="PR01175">
    <property type="entry name" value="VNEBNERGLAND"/>
</dbReference>
<dbReference type="SUPFAM" id="SSF50814">
    <property type="entry name" value="Lipocalins"/>
    <property type="match status" value="1"/>
</dbReference>
<evidence type="ECO:0000269" key="1">
    <source>
    </source>
</evidence>
<evidence type="ECO:0000269" key="2">
    <source>
    </source>
</evidence>
<evidence type="ECO:0000269" key="3">
    <source>
    </source>
</evidence>
<evidence type="ECO:0000269" key="4">
    <source>
    </source>
</evidence>
<evidence type="ECO:0000269" key="5">
    <source ref="8"/>
</evidence>
<evidence type="ECO:0000305" key="6"/>
<evidence type="ECO:0007829" key="7">
    <source>
        <dbReference type="PDB" id="1XKI"/>
    </source>
</evidence>
<evidence type="ECO:0007829" key="8">
    <source>
        <dbReference type="PDB" id="4QAF"/>
    </source>
</evidence>
<evidence type="ECO:0007829" key="9">
    <source>
        <dbReference type="PDB" id="5T43"/>
    </source>
</evidence>
<protein>
    <recommendedName>
        <fullName>Lipocalin-1</fullName>
    </recommendedName>
    <alternativeName>
        <fullName>Tear lipocalin</fullName>
        <shortName>Tlc</shortName>
    </alternativeName>
    <alternativeName>
        <fullName>Tear prealbumin</fullName>
        <shortName>TP</shortName>
    </alternativeName>
    <alternativeName>
        <fullName>von Ebner gland protein</fullName>
        <shortName>VEG protein</shortName>
    </alternativeName>
</protein>
<accession>P31025</accession>
<accession>Q5T8A1</accession>
<organism>
    <name type="scientific">Homo sapiens</name>
    <name type="common">Human</name>
    <dbReference type="NCBI Taxonomy" id="9606"/>
    <lineage>
        <taxon>Eukaryota</taxon>
        <taxon>Metazoa</taxon>
        <taxon>Chordata</taxon>
        <taxon>Craniata</taxon>
        <taxon>Vertebrata</taxon>
        <taxon>Euteleostomi</taxon>
        <taxon>Mammalia</taxon>
        <taxon>Eutheria</taxon>
        <taxon>Euarchontoglires</taxon>
        <taxon>Primates</taxon>
        <taxon>Haplorrhini</taxon>
        <taxon>Catarrhini</taxon>
        <taxon>Hominidae</taxon>
        <taxon>Homo</taxon>
    </lineage>
</organism>
<name>LCN1_HUMAN</name>